<feature type="signal peptide" evidence="3">
    <location>
        <begin position="1"/>
        <end position="19"/>
    </location>
</feature>
<feature type="chain" id="PRO_5004258194" description="Copper acquisition factor BIM1">
    <location>
        <begin position="20"/>
        <end position="190"/>
    </location>
</feature>
<feature type="propeptide" id="PRO_0000459757" description="Removed in mature form" evidence="3">
    <location>
        <begin position="191"/>
        <end position="218"/>
    </location>
</feature>
<feature type="region of interest" description="Disordered" evidence="5">
    <location>
        <begin position="160"/>
        <end position="194"/>
    </location>
</feature>
<feature type="compositionally biased region" description="Low complexity" evidence="5">
    <location>
        <begin position="167"/>
        <end position="194"/>
    </location>
</feature>
<feature type="binding site" evidence="1">
    <location>
        <position position="20"/>
    </location>
    <ligand>
        <name>Cu(2+)</name>
        <dbReference type="ChEBI" id="CHEBI:29036"/>
    </ligand>
</feature>
<feature type="binding site" evidence="1">
    <location>
        <position position="65"/>
    </location>
    <ligand>
        <name>Cu(2+)</name>
        <dbReference type="ChEBI" id="CHEBI:29036"/>
    </ligand>
</feature>
<feature type="binding site" evidence="1">
    <location>
        <position position="138"/>
    </location>
    <ligand>
        <name>Cu(2+)</name>
        <dbReference type="ChEBI" id="CHEBI:29036"/>
    </ligand>
</feature>
<feature type="lipid moiety-binding region" description="GPI-anchor amidated serine" evidence="3">
    <location>
        <position position="190"/>
    </location>
</feature>
<feature type="glycosylation site" description="N-linked (GlcNAc...) asparagine" evidence="4">
    <location>
        <position position="87"/>
    </location>
</feature>
<feature type="glycosylation site" description="N-linked (GlcNAc...) asparagine" evidence="4">
    <location>
        <position position="91"/>
    </location>
</feature>
<feature type="glycosylation site" description="N-linked (GlcNAc...) asparagine" evidence="4">
    <location>
        <position position="124"/>
    </location>
</feature>
<feature type="glycosylation site" description="N-linked (GlcNAc...) asparagine" evidence="4">
    <location>
        <position position="158"/>
    </location>
</feature>
<feature type="glycosylation site" description="N-linked (GlcNAc...) asparagine" evidence="4">
    <location>
        <position position="170"/>
    </location>
</feature>
<feature type="disulfide bond" evidence="1">
    <location>
        <begin position="40"/>
        <end position="144"/>
    </location>
</feature>
<feature type="disulfide bond" evidence="1">
    <location>
        <begin position="110"/>
        <end position="161"/>
    </location>
</feature>
<evidence type="ECO:0000250" key="1">
    <source>
        <dbReference type="UniProtKB" id="A0A4P9I8G4"/>
    </source>
</evidence>
<evidence type="ECO:0000250" key="2">
    <source>
        <dbReference type="UniProtKB" id="J9VHN6"/>
    </source>
</evidence>
<evidence type="ECO:0000255" key="3"/>
<evidence type="ECO:0000255" key="4">
    <source>
        <dbReference type="PROSITE-ProRule" id="PRU00498"/>
    </source>
</evidence>
<evidence type="ECO:0000256" key="5">
    <source>
        <dbReference type="SAM" id="MobiDB-lite"/>
    </source>
</evidence>
<evidence type="ECO:0000303" key="6">
    <source>
    </source>
</evidence>
<evidence type="ECO:0000305" key="7"/>
<evidence type="ECO:0000305" key="8">
    <source>
    </source>
</evidence>
<name>X325_CRYNJ</name>
<accession>Q5KK80</accession>
<accession>Q55W14</accession>
<sequence>MFALKFILITSFIASTALAHFTLDFPESRGFVSDIEGQFCGGFSTVGPRQPFPLGSGPVHINSHHSLATVVAFISTSSNPTSFDDFNTTSNGTIIPLASNIFQVTQGEKCFNIDLESLNVGLTNGSEVTLQIQYDGGDGDLYQCSDLVLIQGYEVPSNETCTDDASRTSNASSTSSGSATATSAAATSSSSGTSGAIKEVVGLGALSLALGIAGLIIL</sequence>
<gene>
    <name evidence="6" type="primary">BIM1</name>
    <name evidence="6" type="synonym">X325</name>
    <name type="ordered locus">CNC03950</name>
</gene>
<keyword id="KW-1003">Cell membrane</keyword>
<keyword id="KW-0186">Copper</keyword>
<keyword id="KW-1015">Disulfide bond</keyword>
<keyword id="KW-0325">Glycoprotein</keyword>
<keyword id="KW-0336">GPI-anchor</keyword>
<keyword id="KW-0449">Lipoprotein</keyword>
<keyword id="KW-0472">Membrane</keyword>
<keyword id="KW-0479">Metal-binding</keyword>
<keyword id="KW-1185">Reference proteome</keyword>
<keyword id="KW-0732">Signal</keyword>
<organism>
    <name type="scientific">Cryptococcus neoformans var. neoformans serotype D (strain JEC21 / ATCC MYA-565)</name>
    <name type="common">Filobasidiella neoformans</name>
    <dbReference type="NCBI Taxonomy" id="214684"/>
    <lineage>
        <taxon>Eukaryota</taxon>
        <taxon>Fungi</taxon>
        <taxon>Dikarya</taxon>
        <taxon>Basidiomycota</taxon>
        <taxon>Agaricomycotina</taxon>
        <taxon>Tremellomycetes</taxon>
        <taxon>Tremellales</taxon>
        <taxon>Cryptococcaceae</taxon>
        <taxon>Cryptococcus</taxon>
        <taxon>Cryptococcus neoformans species complex</taxon>
    </lineage>
</organism>
<comment type="function">
    <text evidence="2 8">Lytic polysaccharide monooxygenase-like protein that has diverged to biological functions other than polysaccharide degradation since it does not perform oxidative cleavage of polysaccharides (Probable). Cell surface-bound protein that functions in the copper-accumulation pathway shared by the CUF1-dependent copper transporter CTR1 (By similarity). Involved in maintaining cell wall integrity during copper deficiency (By similarity). Binds Cu(2+) with an estimated 1:1 stoichiometry and might serve as an extracellular copper ligand (By similarity). FRE4 and FRE7 metalloreductases probably function together with CTR1 and BIM1 to liberate the Cu(2+) bound to the BIM1 copper-binding site for subsequent import of Cu(+) into the cell by CTR1, via the reduction of BIM1-bound Cu(2+) to Cu(+) to reduce binding affinity for BIM1 but increase affinity for CTR1 (By similarity). Facilitates copper acquisition in the brain of mammalian hosts and acts as a copper-dependent virulence trait in fungal meningitis (By similarity). While BIM1 plays a critical role in cryptococcal meningitis, at least in part through its role in copper acquisition, it could play additional roles during copper limitation or as a means to invade and colonize host tissues in the brain, by compromising host carbohydrate integrity via its lytic polysaccharide monooxygenase (LPMO) activity, which has still to be determined (By similarity).</text>
</comment>
<comment type="cofactor">
    <cofactor evidence="2">
        <name>Cu(2+)</name>
        <dbReference type="ChEBI" id="CHEBI:29036"/>
    </cofactor>
    <text evidence="2">Binds 1 copper ion per subunit.</text>
</comment>
<comment type="subcellular location">
    <subcellularLocation>
        <location evidence="3">Cell membrane</location>
        <topology evidence="3">Lipid-anchor</topology>
        <topology evidence="3">GPI-anchor</topology>
    </subcellularLocation>
    <text evidence="8">Proteins attached to a GPI anchor via their C terminus are found in the outer leaflet of the lipid bilayer facing the extracellular environment. GPI anchors can also be considered as predetermined breaking points, which allow the release of proteins into the extracellular environment upon enzymatic cleavage.</text>
</comment>
<comment type="similarity">
    <text evidence="7">Belongs to the X325 family.</text>
</comment>
<proteinExistence type="inferred from homology"/>
<protein>
    <recommendedName>
        <fullName evidence="2">Copper acquisition factor BIM1</fullName>
    </recommendedName>
    <alternativeName>
        <fullName evidence="2">BCS-inducible membrane protein 1</fullName>
    </alternativeName>
    <alternativeName>
        <fullName evidence="6">Lytic polysaccharide monooxygenase-like protein BIM1</fullName>
        <shortName evidence="6">LPMO-like protein BIM1</shortName>
    </alternativeName>
    <alternativeName>
        <fullName evidence="6">X325 family protein BIM1</fullName>
    </alternativeName>
</protein>
<dbReference type="EMBL" id="AE017343">
    <property type="protein sequence ID" value="AAW42321.1"/>
    <property type="molecule type" value="Genomic_DNA"/>
</dbReference>
<dbReference type="RefSeq" id="XP_569628.1">
    <property type="nucleotide sequence ID" value="XM_569628.1"/>
</dbReference>
<dbReference type="SMR" id="Q5KK80"/>
<dbReference type="STRING" id="214684.Q5KK80"/>
<dbReference type="PaxDb" id="214684-Q5KK80"/>
<dbReference type="EnsemblFungi" id="AAW42321">
    <property type="protein sequence ID" value="AAW42321"/>
    <property type="gene ID" value="CNC03950"/>
</dbReference>
<dbReference type="GeneID" id="3256547"/>
<dbReference type="KEGG" id="cne:CNC03950"/>
<dbReference type="VEuPathDB" id="FungiDB:CNC03950"/>
<dbReference type="eggNOG" id="ENOG502S92W">
    <property type="taxonomic scope" value="Eukaryota"/>
</dbReference>
<dbReference type="HOGENOM" id="CLU_070647_3_1_1"/>
<dbReference type="InParanoid" id="Q5KK80"/>
<dbReference type="OMA" id="MCYNTHG"/>
<dbReference type="OrthoDB" id="2146436at2759"/>
<dbReference type="Proteomes" id="UP000002149">
    <property type="component" value="Chromosome 3"/>
</dbReference>
<dbReference type="GO" id="GO:0005886">
    <property type="term" value="C:plasma membrane"/>
    <property type="evidence" value="ECO:0007669"/>
    <property type="project" value="UniProtKB-SubCell"/>
</dbReference>
<dbReference type="GO" id="GO:0098552">
    <property type="term" value="C:side of membrane"/>
    <property type="evidence" value="ECO:0007669"/>
    <property type="project" value="UniProtKB-KW"/>
</dbReference>
<dbReference type="GO" id="GO:0046872">
    <property type="term" value="F:metal ion binding"/>
    <property type="evidence" value="ECO:0007669"/>
    <property type="project" value="UniProtKB-KW"/>
</dbReference>
<dbReference type="CDD" id="cd21176">
    <property type="entry name" value="LPMO_auxiliary-like"/>
    <property type="match status" value="1"/>
</dbReference>
<dbReference type="InterPro" id="IPR046936">
    <property type="entry name" value="BIM1-like"/>
</dbReference>
<dbReference type="InterPro" id="IPR046530">
    <property type="entry name" value="BIM1-like_dom"/>
</dbReference>
<dbReference type="PANTHER" id="PTHR34992:SF11">
    <property type="entry name" value="COPPER ACQUISITION FACTOR BIM1-LIKE DOMAIN-CONTAINING PROTEIN"/>
    <property type="match status" value="1"/>
</dbReference>
<dbReference type="PANTHER" id="PTHR34992">
    <property type="entry name" value="HYPHAL ANASTAMOSIS-7 PROTEIN"/>
    <property type="match status" value="1"/>
</dbReference>
<dbReference type="Pfam" id="PF20238">
    <property type="entry name" value="BIM1-like_dom"/>
    <property type="match status" value="1"/>
</dbReference>
<reference key="1">
    <citation type="journal article" date="2005" name="Science">
        <title>The genome of the basidiomycetous yeast and human pathogen Cryptococcus neoformans.</title>
        <authorList>
            <person name="Loftus B.J."/>
            <person name="Fung E."/>
            <person name="Roncaglia P."/>
            <person name="Rowley D."/>
            <person name="Amedeo P."/>
            <person name="Bruno D."/>
            <person name="Vamathevan J."/>
            <person name="Miranda M."/>
            <person name="Anderson I.J."/>
            <person name="Fraser J.A."/>
            <person name="Allen J.E."/>
            <person name="Bosdet I.E."/>
            <person name="Brent M.R."/>
            <person name="Chiu R."/>
            <person name="Doering T.L."/>
            <person name="Donlin M.J."/>
            <person name="D'Souza C.A."/>
            <person name="Fox D.S."/>
            <person name="Grinberg V."/>
            <person name="Fu J."/>
            <person name="Fukushima M."/>
            <person name="Haas B.J."/>
            <person name="Huang J.C."/>
            <person name="Janbon G."/>
            <person name="Jones S.J.M."/>
            <person name="Koo H.L."/>
            <person name="Krzywinski M.I."/>
            <person name="Kwon-Chung K.J."/>
            <person name="Lengeler K.B."/>
            <person name="Maiti R."/>
            <person name="Marra M.A."/>
            <person name="Marra R.E."/>
            <person name="Mathewson C.A."/>
            <person name="Mitchell T.G."/>
            <person name="Pertea M."/>
            <person name="Riggs F.R."/>
            <person name="Salzberg S.L."/>
            <person name="Schein J.E."/>
            <person name="Shvartsbeyn A."/>
            <person name="Shin H."/>
            <person name="Shumway M."/>
            <person name="Specht C.A."/>
            <person name="Suh B.B."/>
            <person name="Tenney A."/>
            <person name="Utterback T.R."/>
            <person name="Wickes B.L."/>
            <person name="Wortman J.R."/>
            <person name="Wye N.H."/>
            <person name="Kronstad J.W."/>
            <person name="Lodge J.K."/>
            <person name="Heitman J."/>
            <person name="Davis R.W."/>
            <person name="Fraser C.M."/>
            <person name="Hyman R.W."/>
        </authorList>
    </citation>
    <scope>NUCLEOTIDE SEQUENCE [LARGE SCALE GENOMIC DNA]</scope>
    <source>
        <strain>JEC21 / ATCC MYA-565</strain>
    </source>
</reference>
<reference key="2">
    <citation type="journal article" date="2020" name="Nat. Chem. Biol.">
        <title>A fungal family of lytic polysaccharide monooxygenase-like copper proteins.</title>
        <authorList>
            <person name="Labourel A."/>
            <person name="Frandsen K.E.H."/>
            <person name="Zhang F."/>
            <person name="Brouilly N."/>
            <person name="Grisel S."/>
            <person name="Haon M."/>
            <person name="Ciano L."/>
            <person name="Ropartz D."/>
            <person name="Fanuel M."/>
            <person name="Martin F."/>
            <person name="Navarro D."/>
            <person name="Rosso M.N."/>
            <person name="Tandrup T."/>
            <person name="Bissaro B."/>
            <person name="Johansen K.S."/>
            <person name="Zerva A."/>
            <person name="Walton P.H."/>
            <person name="Henrissat B."/>
            <person name="Leggio L.L."/>
            <person name="Berrin J.G."/>
        </authorList>
    </citation>
    <scope>IDENTIFICATION</scope>
    <scope>FUNCTION</scope>
</reference>